<keyword id="KW-0028">Amino-acid biosynthesis</keyword>
<keyword id="KW-0368">Histidine biosynthesis</keyword>
<keyword id="KW-0378">Hydrolase</keyword>
<keyword id="KW-0486">Methionine biosynthesis</keyword>
<keyword id="KW-0511">Multifunctional enzyme</keyword>
<keyword id="KW-0521">NADP</keyword>
<keyword id="KW-0554">One-carbon metabolism</keyword>
<keyword id="KW-0560">Oxidoreductase</keyword>
<keyword id="KW-0658">Purine biosynthesis</keyword>
<name>FOLD_LACH4</name>
<protein>
    <recommendedName>
        <fullName evidence="1">Bifunctional protein FolD</fullName>
    </recommendedName>
    <domain>
        <recommendedName>
            <fullName evidence="1">Methylenetetrahydrofolate dehydrogenase</fullName>
            <ecNumber evidence="1">1.5.1.5</ecNumber>
        </recommendedName>
    </domain>
    <domain>
        <recommendedName>
            <fullName evidence="1">Methenyltetrahydrofolate cyclohydrolase</fullName>
            <ecNumber evidence="1">3.5.4.9</ecNumber>
        </recommendedName>
    </domain>
</protein>
<reference key="1">
    <citation type="journal article" date="2008" name="J. Bacteriol.">
        <title>Genome sequence of Lactobacillus helveticus: an organism distinguished by selective gene loss and IS element expansion.</title>
        <authorList>
            <person name="Callanan M."/>
            <person name="Kaleta P."/>
            <person name="O'Callaghan J."/>
            <person name="O'Sullivan O."/>
            <person name="Jordan K."/>
            <person name="McAuliffe O."/>
            <person name="Sangrador-Vegas A."/>
            <person name="Slattery L."/>
            <person name="Fitzgerald G.F."/>
            <person name="Beresford T."/>
            <person name="Ross R.P."/>
        </authorList>
    </citation>
    <scope>NUCLEOTIDE SEQUENCE [LARGE SCALE GENOMIC DNA]</scope>
    <source>
        <strain>DPC 4571</strain>
    </source>
</reference>
<dbReference type="EC" id="1.5.1.5" evidence="1"/>
<dbReference type="EC" id="3.5.4.9" evidence="1"/>
<dbReference type="EMBL" id="CP000517">
    <property type="protein sequence ID" value="ABX27400.1"/>
    <property type="molecule type" value="Genomic_DNA"/>
</dbReference>
<dbReference type="EMBL" id="CP000517">
    <property type="protein sequence ID" value="ABX27401.1"/>
    <property type="molecule type" value="Genomic_DNA"/>
</dbReference>
<dbReference type="RefSeq" id="WP_012212033.1">
    <property type="nucleotide sequence ID" value="NC_010080.1"/>
</dbReference>
<dbReference type="SMR" id="A8YVX0"/>
<dbReference type="KEGG" id="lhe:lhv_1415"/>
<dbReference type="KEGG" id="lhe:lhv_1418"/>
<dbReference type="eggNOG" id="COG0190">
    <property type="taxonomic scope" value="Bacteria"/>
</dbReference>
<dbReference type="HOGENOM" id="CLU_034045_2_1_9"/>
<dbReference type="UniPathway" id="UPA00193"/>
<dbReference type="Proteomes" id="UP000000790">
    <property type="component" value="Chromosome"/>
</dbReference>
<dbReference type="GO" id="GO:0005829">
    <property type="term" value="C:cytosol"/>
    <property type="evidence" value="ECO:0007669"/>
    <property type="project" value="TreeGrafter"/>
</dbReference>
<dbReference type="GO" id="GO:0004477">
    <property type="term" value="F:methenyltetrahydrofolate cyclohydrolase activity"/>
    <property type="evidence" value="ECO:0007669"/>
    <property type="project" value="UniProtKB-UniRule"/>
</dbReference>
<dbReference type="GO" id="GO:0004488">
    <property type="term" value="F:methylenetetrahydrofolate dehydrogenase (NADP+) activity"/>
    <property type="evidence" value="ECO:0007669"/>
    <property type="project" value="UniProtKB-UniRule"/>
</dbReference>
<dbReference type="GO" id="GO:0000105">
    <property type="term" value="P:L-histidine biosynthetic process"/>
    <property type="evidence" value="ECO:0007669"/>
    <property type="project" value="UniProtKB-KW"/>
</dbReference>
<dbReference type="GO" id="GO:0009086">
    <property type="term" value="P:methionine biosynthetic process"/>
    <property type="evidence" value="ECO:0007669"/>
    <property type="project" value="UniProtKB-KW"/>
</dbReference>
<dbReference type="GO" id="GO:0006164">
    <property type="term" value="P:purine nucleotide biosynthetic process"/>
    <property type="evidence" value="ECO:0007669"/>
    <property type="project" value="UniProtKB-KW"/>
</dbReference>
<dbReference type="GO" id="GO:0035999">
    <property type="term" value="P:tetrahydrofolate interconversion"/>
    <property type="evidence" value="ECO:0007669"/>
    <property type="project" value="UniProtKB-UniRule"/>
</dbReference>
<dbReference type="CDD" id="cd01080">
    <property type="entry name" value="NAD_bind_m-THF_DH_Cyclohyd"/>
    <property type="match status" value="1"/>
</dbReference>
<dbReference type="FunFam" id="3.40.50.720:FF:000094">
    <property type="entry name" value="Bifunctional protein FolD"/>
    <property type="match status" value="1"/>
</dbReference>
<dbReference type="FunFam" id="3.40.50.10860:FF:000005">
    <property type="entry name" value="C-1-tetrahydrofolate synthase, cytoplasmic, putative"/>
    <property type="match status" value="1"/>
</dbReference>
<dbReference type="Gene3D" id="3.40.50.10860">
    <property type="entry name" value="Leucine Dehydrogenase, chain A, domain 1"/>
    <property type="match status" value="1"/>
</dbReference>
<dbReference type="Gene3D" id="3.40.50.720">
    <property type="entry name" value="NAD(P)-binding Rossmann-like Domain"/>
    <property type="match status" value="1"/>
</dbReference>
<dbReference type="HAMAP" id="MF_01576">
    <property type="entry name" value="THF_DHG_CYH"/>
    <property type="match status" value="1"/>
</dbReference>
<dbReference type="InterPro" id="IPR046346">
    <property type="entry name" value="Aminoacid_DH-like_N_sf"/>
</dbReference>
<dbReference type="InterPro" id="IPR036291">
    <property type="entry name" value="NAD(P)-bd_dom_sf"/>
</dbReference>
<dbReference type="InterPro" id="IPR000672">
    <property type="entry name" value="THF_DH/CycHdrlase"/>
</dbReference>
<dbReference type="InterPro" id="IPR020630">
    <property type="entry name" value="THF_DH/CycHdrlase_cat_dom"/>
</dbReference>
<dbReference type="InterPro" id="IPR020631">
    <property type="entry name" value="THF_DH/CycHdrlase_NAD-bd_dom"/>
</dbReference>
<dbReference type="PANTHER" id="PTHR48099:SF5">
    <property type="entry name" value="C-1-TETRAHYDROFOLATE SYNTHASE, CYTOPLASMIC"/>
    <property type="match status" value="1"/>
</dbReference>
<dbReference type="PANTHER" id="PTHR48099">
    <property type="entry name" value="C-1-TETRAHYDROFOLATE SYNTHASE, CYTOPLASMIC-RELATED"/>
    <property type="match status" value="1"/>
</dbReference>
<dbReference type="Pfam" id="PF00763">
    <property type="entry name" value="THF_DHG_CYH"/>
    <property type="match status" value="1"/>
</dbReference>
<dbReference type="Pfam" id="PF02882">
    <property type="entry name" value="THF_DHG_CYH_C"/>
    <property type="match status" value="1"/>
</dbReference>
<dbReference type="PRINTS" id="PR00085">
    <property type="entry name" value="THFDHDRGNASE"/>
</dbReference>
<dbReference type="SUPFAM" id="SSF53223">
    <property type="entry name" value="Aminoacid dehydrogenase-like, N-terminal domain"/>
    <property type="match status" value="1"/>
</dbReference>
<dbReference type="SUPFAM" id="SSF51735">
    <property type="entry name" value="NAD(P)-binding Rossmann-fold domains"/>
    <property type="match status" value="1"/>
</dbReference>
<comment type="function">
    <text evidence="1">Catalyzes the oxidation of 5,10-methylenetetrahydrofolate to 5,10-methenyltetrahydrofolate and then the hydrolysis of 5,10-methenyltetrahydrofolate to 10-formyltetrahydrofolate.</text>
</comment>
<comment type="catalytic activity">
    <reaction evidence="1">
        <text>(6R)-5,10-methylene-5,6,7,8-tetrahydrofolate + NADP(+) = (6R)-5,10-methenyltetrahydrofolate + NADPH</text>
        <dbReference type="Rhea" id="RHEA:22812"/>
        <dbReference type="ChEBI" id="CHEBI:15636"/>
        <dbReference type="ChEBI" id="CHEBI:57455"/>
        <dbReference type="ChEBI" id="CHEBI:57783"/>
        <dbReference type="ChEBI" id="CHEBI:58349"/>
        <dbReference type="EC" id="1.5.1.5"/>
    </reaction>
</comment>
<comment type="catalytic activity">
    <reaction evidence="1">
        <text>(6R)-5,10-methenyltetrahydrofolate + H2O = (6R)-10-formyltetrahydrofolate + H(+)</text>
        <dbReference type="Rhea" id="RHEA:23700"/>
        <dbReference type="ChEBI" id="CHEBI:15377"/>
        <dbReference type="ChEBI" id="CHEBI:15378"/>
        <dbReference type="ChEBI" id="CHEBI:57455"/>
        <dbReference type="ChEBI" id="CHEBI:195366"/>
        <dbReference type="EC" id="3.5.4.9"/>
    </reaction>
</comment>
<comment type="pathway">
    <text evidence="1">One-carbon metabolism; tetrahydrofolate interconversion.</text>
</comment>
<comment type="subunit">
    <text evidence="1">Homodimer.</text>
</comment>
<comment type="similarity">
    <text evidence="1">Belongs to the tetrahydrofolate dehydrogenase/cyclohydrolase family.</text>
</comment>
<accession>A8YVX0</accession>
<sequence length="282" mass="30688">MGKVLDGKTFANLLGQNLKEKVKKLKDEGITPHFCVINIGDDPASKIYVRTKKRRAEKMGIIQDIYQMSADTKQEEAIALIDKLNADPAINGLMVQLPAPKQIDTDALIERIDPNKDADGLTPANIGHLWMDKHFVEPATAEGIIALLKHYEIPLEGKNVVIIGRSNIVGKPLAALMLEQNATVTIAHSRTKNLGEITKKADVLVSATGQAFLVKADMVKDGAVVVDVGMNHVDGKLVGDVDFDNVKEKASYITPVPGGVGPLTVQFLMEAVVKLTRRQNDR</sequence>
<proteinExistence type="inferred from homology"/>
<organism>
    <name type="scientific">Lactobacillus helveticus (strain DPC 4571)</name>
    <dbReference type="NCBI Taxonomy" id="405566"/>
    <lineage>
        <taxon>Bacteria</taxon>
        <taxon>Bacillati</taxon>
        <taxon>Bacillota</taxon>
        <taxon>Bacilli</taxon>
        <taxon>Lactobacillales</taxon>
        <taxon>Lactobacillaceae</taxon>
        <taxon>Lactobacillus</taxon>
    </lineage>
</organism>
<gene>
    <name evidence="1" type="primary">folD1</name>
    <name type="ordered locus">lhv_1415</name>
</gene>
<gene>
    <name evidence="1" type="primary">folD2</name>
    <name type="ordered locus">lhv_1418</name>
</gene>
<evidence type="ECO:0000255" key="1">
    <source>
        <dbReference type="HAMAP-Rule" id="MF_01576"/>
    </source>
</evidence>
<feature type="chain" id="PRO_0000340582" description="Bifunctional protein FolD">
    <location>
        <begin position="1"/>
        <end position="282"/>
    </location>
</feature>
<feature type="binding site" evidence="1">
    <location>
        <begin position="164"/>
        <end position="166"/>
    </location>
    <ligand>
        <name>NADP(+)</name>
        <dbReference type="ChEBI" id="CHEBI:58349"/>
    </ligand>
</feature>
<feature type="binding site" evidence="1">
    <location>
        <position position="189"/>
    </location>
    <ligand>
        <name>NADP(+)</name>
        <dbReference type="ChEBI" id="CHEBI:58349"/>
    </ligand>
</feature>